<name>TRAT1_HUMAN</name>
<evidence type="ECO:0000250" key="1">
    <source>
        <dbReference type="UniProtKB" id="Q3UU67"/>
    </source>
</evidence>
<evidence type="ECO:0000255" key="2"/>
<evidence type="ECO:0000256" key="3">
    <source>
        <dbReference type="SAM" id="MobiDB-lite"/>
    </source>
</evidence>
<evidence type="ECO:0000269" key="4">
    <source>
    </source>
</evidence>
<evidence type="ECO:0000269" key="5">
    <source>
    </source>
</evidence>
<evidence type="ECO:0000269" key="6">
    <source>
    </source>
</evidence>
<evidence type="ECO:0000305" key="7"/>
<evidence type="ECO:0000305" key="8">
    <source>
    </source>
</evidence>
<feature type="chain" id="PRO_0000083344" description="T-cell receptor-associated transmembrane adapter 1">
    <location>
        <begin position="1"/>
        <end position="186"/>
    </location>
</feature>
<feature type="topological domain" description="Extracellular" evidence="2">
    <location>
        <begin position="1"/>
        <end position="7"/>
    </location>
</feature>
<feature type="transmembrane region" description="Helical; Signal-anchor for type III membrane protein" evidence="2">
    <location>
        <begin position="8"/>
        <end position="28"/>
    </location>
</feature>
<feature type="topological domain" description="Cytoplasmic" evidence="2">
    <location>
        <begin position="29"/>
        <end position="186"/>
    </location>
</feature>
<feature type="region of interest" description="Interaction with PIK3R1" evidence="6">
    <location>
        <begin position="79"/>
        <end position="82"/>
    </location>
</feature>
<feature type="region of interest" description="Disordered" evidence="3">
    <location>
        <begin position="116"/>
        <end position="140"/>
    </location>
</feature>
<feature type="compositionally biased region" description="Basic residues" evidence="3">
    <location>
        <begin position="118"/>
        <end position="128"/>
    </location>
</feature>
<feature type="compositionally biased region" description="Basic and acidic residues" evidence="3">
    <location>
        <begin position="131"/>
        <end position="140"/>
    </location>
</feature>
<feature type="modified residue" description="Phosphoserine" evidence="1">
    <location>
        <position position="46"/>
    </location>
</feature>
<feature type="modified residue" description="Phosphotyrosine" evidence="8">
    <location>
        <position position="79"/>
    </location>
</feature>
<feature type="disulfide bond" description="Interchain" evidence="7">
    <location>
        <position position="7"/>
    </location>
</feature>
<feature type="sequence variant" id="VAR_062195" description="In dbSNP:rs57744779.">
    <original>D</original>
    <variation>G</variation>
    <location>
        <position position="137"/>
    </location>
</feature>
<feature type="sequence variant" id="VAR_062196" description="In dbSNP:rs61585973.">
    <original>S</original>
    <variation>P</variation>
    <location>
        <position position="148"/>
    </location>
</feature>
<feature type="mutagenesis site" description="Abolishes interaction with PIK3R1." evidence="6">
    <original>Y</original>
    <variation>F</variation>
    <location>
        <position position="79"/>
    </location>
</feature>
<keyword id="KW-1064">Adaptive immunity</keyword>
<keyword id="KW-1003">Cell membrane</keyword>
<keyword id="KW-0903">Direct protein sequencing</keyword>
<keyword id="KW-1015">Disulfide bond</keyword>
<keyword id="KW-0391">Immunity</keyword>
<keyword id="KW-0472">Membrane</keyword>
<keyword id="KW-0597">Phosphoprotein</keyword>
<keyword id="KW-1267">Proteomics identification</keyword>
<keyword id="KW-1185">Reference proteome</keyword>
<keyword id="KW-0735">Signal-anchor</keyword>
<keyword id="KW-0812">Transmembrane</keyword>
<keyword id="KW-1133">Transmembrane helix</keyword>
<comment type="function">
    <text evidence="4">Stabilizes the TCR (T-cell antigen receptor)/CD3 complex at the surface of T-cells.</text>
</comment>
<comment type="subunit">
    <text evidence="4 6">Homodimer; disulfide-linked. Interacts with CD3Z. When phosphorylated, interacts with PIK3R1.</text>
</comment>
<comment type="interaction">
    <interactant intactId="EBI-17710254">
        <id>Q6PIZ9</id>
    </interactant>
    <interactant intactId="EBI-8652744">
        <id>Q96IW7</id>
        <label>SEC22A</label>
    </interactant>
    <organismsDiffer>false</organismsDiffer>
    <experiments>3</experiments>
</comment>
<comment type="subcellular location">
    <subcellularLocation>
        <location evidence="6">Cell membrane</location>
        <topology evidence="6">Single-pass type III membrane protein</topology>
    </subcellularLocation>
</comment>
<comment type="tissue specificity">
    <text evidence="5 6">Strongly expressed in thymus, and to a lesser extent in spleen, lymph node and peripheral blood lymphocytes. Present in T-cells and NK cells, but not B-cells (at protein level).</text>
</comment>
<comment type="developmental stage">
    <text evidence="6">Strongly expressed in fetal thymus at weeks 17-24 of gestation. Undetectable in bone marrow and fetal liver.</text>
</comment>
<comment type="PTM">
    <text evidence="6">Phosphorylated on tyrosines by LCK or FYN upon TCR activation.</text>
</comment>
<comment type="sequence caution" evidence="7">
    <conflict type="frameshift">
        <sequence resource="EMBL-CDS" id="AAF29034"/>
    </conflict>
</comment>
<accession>Q6PIZ9</accession>
<accession>Q9NZX5</accession>
<sequence length="186" mass="21211">MSGISGCPFFLWGLLALLGLALVISLIFNISHYVEKQRQDKMYSYSSDHTRVDEYYIEDTPIYGNLDDMISEPMDENCYEQMKARPEKSVNKMQEATPSAQATNETQMCYASLDHSVKGKRRKPRKQNTHFSDKDGDEQLHAIDASVSKTTLVDSFSPESQAVEENIHDDPIRLFGLIRAKREPIN</sequence>
<proteinExistence type="evidence at protein level"/>
<reference key="1">
    <citation type="journal article" date="1998" name="J. Exp. Med.">
        <title>T cell receptor (TCR) interacting molecule (TRIM), a novel disulfide-linked dimer associated with the TCR-CD3-zeta complex, recruits intracellular signaling proteins to the plasma membrane.</title>
        <authorList>
            <person name="Bruyns E."/>
            <person name="Marie-Cardine A."/>
            <person name="Kirchgessner H."/>
            <person name="Sagolla K."/>
            <person name="Shevchenko A."/>
            <person name="Mann M."/>
            <person name="Autschbach F."/>
            <person name="Bensussan A."/>
            <person name="Meuer S."/>
            <person name="Schraven B."/>
        </authorList>
    </citation>
    <scope>NUCLEOTIDE SEQUENCE [MRNA]</scope>
    <scope>PROTEIN SEQUENCE OF 152-167</scope>
    <scope>IDENTIFICATION BY MASS SPECTROMETRY</scope>
    <scope>DIMERIZATION</scope>
    <scope>INTERACTION WITH THE TCR COMPLEX AND PIK3R1</scope>
    <scope>TISSUE SPECIFICITY</scope>
    <scope>DEVELOPMENTAL STAGE</scope>
    <scope>PHOSPHORYLATION AT TYR-79</scope>
    <scope>SUBCELLULAR LOCATION</scope>
    <scope>MUTAGENESIS OF TYR-79</scope>
</reference>
<reference key="2">
    <citation type="journal article" date="2000" name="Genome Res.">
        <title>Cloning and functional analysis of cDNAs with open reading frames for 300 previously undefined genes expressed in CD34+ hematopoietic stem/progenitor cells.</title>
        <authorList>
            <person name="Zhang Q.-H."/>
            <person name="Ye M."/>
            <person name="Wu X.-Y."/>
            <person name="Ren S.-X."/>
            <person name="Zhao M."/>
            <person name="Zhao C.-J."/>
            <person name="Fu G."/>
            <person name="Shen Y."/>
            <person name="Fan H.-Y."/>
            <person name="Lu G."/>
            <person name="Zhong M."/>
            <person name="Xu X.-R."/>
            <person name="Han Z.-G."/>
            <person name="Zhang J.-W."/>
            <person name="Tao J."/>
            <person name="Huang Q.-H."/>
            <person name="Zhou J."/>
            <person name="Hu G.-X."/>
            <person name="Gu J."/>
            <person name="Chen S.-J."/>
            <person name="Chen Z."/>
        </authorList>
    </citation>
    <scope>NUCLEOTIDE SEQUENCE [LARGE SCALE MRNA]</scope>
    <source>
        <tissue>Umbilical cord blood</tissue>
    </source>
</reference>
<reference key="3">
    <citation type="journal article" date="2004" name="Genome Res.">
        <title>The status, quality, and expansion of the NIH full-length cDNA project: the Mammalian Gene Collection (MGC).</title>
        <authorList>
            <consortium name="The MGC Project Team"/>
        </authorList>
    </citation>
    <scope>NUCLEOTIDE SEQUENCE [LARGE SCALE MRNA]</scope>
    <source>
        <tissue>Pancreas</tissue>
    </source>
</reference>
<reference key="4">
    <citation type="journal article" date="2001" name="J. Exp. Med.">
        <title>The transmembrane adaptor protein TRIM regulates T-cell receptor (TCR) expression and TCR-mediated signaling via an association with the TCR zeta chain.</title>
        <authorList>
            <person name="Kirchgessner H."/>
            <person name="Dietrich J."/>
            <person name="Scherer J."/>
            <person name="Isomaeki P."/>
            <person name="Korinek V."/>
            <person name="Hilgert I."/>
            <person name="Bruyns E."/>
            <person name="Leo A."/>
            <person name="Cope A.P."/>
            <person name="Schraven B."/>
        </authorList>
    </citation>
    <scope>FUNCTION</scope>
    <scope>INTERACTION WITH CD3Z</scope>
</reference>
<reference key="5">
    <citation type="journal article" date="2006" name="Blood">
        <title>Transmembrane adaptor molecules: a new category of lymphoid-cell markers.</title>
        <authorList>
            <person name="Tedoldi S."/>
            <person name="Paterson J.C."/>
            <person name="Hansmann M.-L."/>
            <person name="Natkunam Y."/>
            <person name="Rudiger T."/>
            <person name="Angelisova P."/>
            <person name="Du M.Q."/>
            <person name="Roberton H."/>
            <person name="Roncador G."/>
            <person name="Sanchez L."/>
            <person name="Pozzobon M."/>
            <person name="Masir N."/>
            <person name="Barry R."/>
            <person name="Pileri S."/>
            <person name="Mason D.Y."/>
            <person name="Marafioti T."/>
            <person name="Horejsi V."/>
        </authorList>
    </citation>
    <scope>TISSUE SPECIFICITY</scope>
</reference>
<organism>
    <name type="scientific">Homo sapiens</name>
    <name type="common">Human</name>
    <dbReference type="NCBI Taxonomy" id="9606"/>
    <lineage>
        <taxon>Eukaryota</taxon>
        <taxon>Metazoa</taxon>
        <taxon>Chordata</taxon>
        <taxon>Craniata</taxon>
        <taxon>Vertebrata</taxon>
        <taxon>Euteleostomi</taxon>
        <taxon>Mammalia</taxon>
        <taxon>Eutheria</taxon>
        <taxon>Euarchontoglires</taxon>
        <taxon>Primates</taxon>
        <taxon>Haplorrhini</taxon>
        <taxon>Catarrhini</taxon>
        <taxon>Hominidae</taxon>
        <taxon>Homo</taxon>
    </lineage>
</organism>
<protein>
    <recommendedName>
        <fullName>T-cell receptor-associated transmembrane adapter 1</fullName>
    </recommendedName>
    <alternativeName>
        <fullName>T-cell receptor-interacting molecule</fullName>
        <shortName>TRIM</shortName>
    </alternativeName>
    <alternativeName>
        <fullName>pp29/30</fullName>
    </alternativeName>
</protein>
<dbReference type="EMBL" id="AF161547">
    <property type="protein sequence ID" value="AAF29034.1"/>
    <property type="status" value="ALT_FRAME"/>
    <property type="molecule type" value="mRNA"/>
</dbReference>
<dbReference type="EMBL" id="BC025713">
    <property type="protein sequence ID" value="AAH25713.1"/>
    <property type="molecule type" value="mRNA"/>
</dbReference>
<dbReference type="CCDS" id="CCDS33813.1"/>
<dbReference type="RefSeq" id="NP_001304676.1">
    <property type="nucleotide sequence ID" value="NM_001317747.1"/>
</dbReference>
<dbReference type="RefSeq" id="NP_057472.2">
    <property type="nucleotide sequence ID" value="NM_016388.4"/>
</dbReference>
<dbReference type="SMR" id="Q6PIZ9"/>
<dbReference type="BioGRID" id="119154">
    <property type="interactions" value="24"/>
</dbReference>
<dbReference type="FunCoup" id="Q6PIZ9">
    <property type="interactions" value="10"/>
</dbReference>
<dbReference type="IntAct" id="Q6PIZ9">
    <property type="interactions" value="13"/>
</dbReference>
<dbReference type="MINT" id="Q6PIZ9"/>
<dbReference type="STRING" id="9606.ENSP00000295756"/>
<dbReference type="iPTMnet" id="Q6PIZ9"/>
<dbReference type="PhosphoSitePlus" id="Q6PIZ9"/>
<dbReference type="BioMuta" id="TRAT1"/>
<dbReference type="DMDM" id="74749223"/>
<dbReference type="MassIVE" id="Q6PIZ9"/>
<dbReference type="PaxDb" id="9606-ENSP00000295756"/>
<dbReference type="PeptideAtlas" id="Q6PIZ9"/>
<dbReference type="ProteomicsDB" id="67189"/>
<dbReference type="Antibodypedia" id="1192">
    <property type="antibodies" value="257 antibodies from 30 providers"/>
</dbReference>
<dbReference type="DNASU" id="50852"/>
<dbReference type="Ensembl" id="ENST00000295756.11">
    <property type="protein sequence ID" value="ENSP00000295756.6"/>
    <property type="gene ID" value="ENSG00000163519.14"/>
</dbReference>
<dbReference type="GeneID" id="50852"/>
<dbReference type="KEGG" id="hsa:50852"/>
<dbReference type="MANE-Select" id="ENST00000295756.11">
    <property type="protein sequence ID" value="ENSP00000295756.6"/>
    <property type="RefSeq nucleotide sequence ID" value="NM_016388.4"/>
    <property type="RefSeq protein sequence ID" value="NP_057472.2"/>
</dbReference>
<dbReference type="UCSC" id="uc003dxi.2">
    <property type="organism name" value="human"/>
</dbReference>
<dbReference type="AGR" id="HGNC:30698"/>
<dbReference type="CTD" id="50852"/>
<dbReference type="DisGeNET" id="50852"/>
<dbReference type="GeneCards" id="TRAT1"/>
<dbReference type="HGNC" id="HGNC:30698">
    <property type="gene designation" value="TRAT1"/>
</dbReference>
<dbReference type="HPA" id="ENSG00000163519">
    <property type="expression patterns" value="Tissue enriched (lymphoid)"/>
</dbReference>
<dbReference type="MIM" id="604962">
    <property type="type" value="gene"/>
</dbReference>
<dbReference type="neXtProt" id="NX_Q6PIZ9"/>
<dbReference type="OpenTargets" id="ENSG00000163519"/>
<dbReference type="PharmGKB" id="PA128394655"/>
<dbReference type="VEuPathDB" id="HostDB:ENSG00000163519"/>
<dbReference type="eggNOG" id="ENOG502S7P1">
    <property type="taxonomic scope" value="Eukaryota"/>
</dbReference>
<dbReference type="GeneTree" id="ENSGT00390000004910"/>
<dbReference type="HOGENOM" id="CLU_125033_1_0_1"/>
<dbReference type="InParanoid" id="Q6PIZ9"/>
<dbReference type="OMA" id="DEDCYEQ"/>
<dbReference type="OrthoDB" id="8952491at2759"/>
<dbReference type="PAN-GO" id="Q6PIZ9">
    <property type="GO annotations" value="3 GO annotations based on evolutionary models"/>
</dbReference>
<dbReference type="PhylomeDB" id="Q6PIZ9"/>
<dbReference type="TreeFam" id="TF336066"/>
<dbReference type="PathwayCommons" id="Q6PIZ9"/>
<dbReference type="Reactome" id="R-HSA-1257604">
    <property type="pathway name" value="PIP3 activates AKT signaling"/>
</dbReference>
<dbReference type="Reactome" id="R-HSA-202424">
    <property type="pathway name" value="Downstream TCR signaling"/>
</dbReference>
<dbReference type="Reactome" id="R-HSA-2219530">
    <property type="pathway name" value="Constitutive Signaling by Aberrant PI3K in Cancer"/>
</dbReference>
<dbReference type="Reactome" id="R-HSA-6811558">
    <property type="pathway name" value="PI5P, PP2A and IER3 Regulate PI3K/AKT Signaling"/>
</dbReference>
<dbReference type="SignaLink" id="Q6PIZ9"/>
<dbReference type="BioGRID-ORCS" id="50852">
    <property type="hits" value="13 hits in 1132 CRISPR screens"/>
</dbReference>
<dbReference type="GeneWiki" id="TRAT1"/>
<dbReference type="GenomeRNAi" id="50852"/>
<dbReference type="Pharos" id="Q6PIZ9">
    <property type="development level" value="Tbio"/>
</dbReference>
<dbReference type="PRO" id="PR:Q6PIZ9"/>
<dbReference type="Proteomes" id="UP000005640">
    <property type="component" value="Chromosome 3"/>
</dbReference>
<dbReference type="RNAct" id="Q6PIZ9">
    <property type="molecule type" value="protein"/>
</dbReference>
<dbReference type="Bgee" id="ENSG00000163519">
    <property type="expression patterns" value="Expressed in buccal mucosa cell and 104 other cell types or tissues"/>
</dbReference>
<dbReference type="ExpressionAtlas" id="Q6PIZ9">
    <property type="expression patterns" value="baseline and differential"/>
</dbReference>
<dbReference type="GO" id="GO:0034451">
    <property type="term" value="C:centriolar satellite"/>
    <property type="evidence" value="ECO:0000314"/>
    <property type="project" value="HPA"/>
</dbReference>
<dbReference type="GO" id="GO:0072686">
    <property type="term" value="C:mitotic spindle"/>
    <property type="evidence" value="ECO:0000314"/>
    <property type="project" value="HPA"/>
</dbReference>
<dbReference type="GO" id="GO:0005886">
    <property type="term" value="C:plasma membrane"/>
    <property type="evidence" value="ECO:0000314"/>
    <property type="project" value="MGI"/>
</dbReference>
<dbReference type="GO" id="GO:0042101">
    <property type="term" value="C:T cell receptor complex"/>
    <property type="evidence" value="ECO:0000314"/>
    <property type="project" value="MGI"/>
</dbReference>
<dbReference type="GO" id="GO:0005068">
    <property type="term" value="F:transmembrane receptor protein tyrosine kinase adaptor activity"/>
    <property type="evidence" value="ECO:0000304"/>
    <property type="project" value="ProtInc"/>
</dbReference>
<dbReference type="GO" id="GO:0002250">
    <property type="term" value="P:adaptive immune response"/>
    <property type="evidence" value="ECO:0007669"/>
    <property type="project" value="UniProtKB-KW"/>
</dbReference>
<dbReference type="GO" id="GO:0006968">
    <property type="term" value="P:cellular defense response"/>
    <property type="evidence" value="ECO:0000304"/>
    <property type="project" value="ProtInc"/>
</dbReference>
<dbReference type="GO" id="GO:0001920">
    <property type="term" value="P:negative regulation of receptor recycling"/>
    <property type="evidence" value="ECO:0000314"/>
    <property type="project" value="MGI"/>
</dbReference>
<dbReference type="GO" id="GO:0051051">
    <property type="term" value="P:negative regulation of transport"/>
    <property type="evidence" value="ECO:0000314"/>
    <property type="project" value="MGI"/>
</dbReference>
<dbReference type="GO" id="GO:0050850">
    <property type="term" value="P:positive regulation of calcium-mediated signaling"/>
    <property type="evidence" value="ECO:0000314"/>
    <property type="project" value="MGI"/>
</dbReference>
<dbReference type="GO" id="GO:0050862">
    <property type="term" value="P:positive regulation of T cell receptor signaling pathway"/>
    <property type="evidence" value="ECO:0000314"/>
    <property type="project" value="MGI"/>
</dbReference>
<dbReference type="GO" id="GO:0007165">
    <property type="term" value="P:signal transduction"/>
    <property type="evidence" value="ECO:0000304"/>
    <property type="project" value="ProtInc"/>
</dbReference>
<dbReference type="InterPro" id="IPR020399">
    <property type="entry name" value="T-cell_rcpt-assoc_TM_adapter-1"/>
</dbReference>
<dbReference type="PANTHER" id="PTHR15951">
    <property type="entry name" value="T-CELL RECEPTOR-ASSOCIATED TRANSMEMBRANE ADAPTER 1"/>
    <property type="match status" value="1"/>
</dbReference>
<dbReference type="PANTHER" id="PTHR15951:SF2">
    <property type="entry name" value="T-CELL RECEPTOR-ASSOCIATED TRANSMEMBRANE ADAPTER 1"/>
    <property type="match status" value="1"/>
</dbReference>
<dbReference type="Pfam" id="PF15330">
    <property type="entry name" value="SIT"/>
    <property type="match status" value="1"/>
</dbReference>
<gene>
    <name type="primary">TRAT1</name>
    <name type="synonym">TCRIM</name>
    <name type="ORF">HSPC062</name>
</gene>